<gene>
    <name evidence="1" type="primary">rpmI</name>
    <name type="ordered locus">ECP_1664</name>
</gene>
<reference key="1">
    <citation type="journal article" date="2006" name="Mol. Microbiol.">
        <title>Role of pathogenicity island-associated integrases in the genome plasticity of uropathogenic Escherichia coli strain 536.</title>
        <authorList>
            <person name="Hochhut B."/>
            <person name="Wilde C."/>
            <person name="Balling G."/>
            <person name="Middendorf B."/>
            <person name="Dobrindt U."/>
            <person name="Brzuszkiewicz E."/>
            <person name="Gottschalk G."/>
            <person name="Carniel E."/>
            <person name="Hacker J."/>
        </authorList>
    </citation>
    <scope>NUCLEOTIDE SEQUENCE [LARGE SCALE GENOMIC DNA]</scope>
    <source>
        <strain>536 / UPEC</strain>
    </source>
</reference>
<dbReference type="EMBL" id="CP000247">
    <property type="protein sequence ID" value="ABG69667.1"/>
    <property type="molecule type" value="Genomic_DNA"/>
</dbReference>
<dbReference type="RefSeq" id="WP_001124225.1">
    <property type="nucleotide sequence ID" value="NC_008253.1"/>
</dbReference>
<dbReference type="SMR" id="Q0THB2"/>
<dbReference type="GeneID" id="97601348"/>
<dbReference type="KEGG" id="ecp:ECP_1664"/>
<dbReference type="HOGENOM" id="CLU_169643_1_1_6"/>
<dbReference type="Proteomes" id="UP000009182">
    <property type="component" value="Chromosome"/>
</dbReference>
<dbReference type="GO" id="GO:0022625">
    <property type="term" value="C:cytosolic large ribosomal subunit"/>
    <property type="evidence" value="ECO:0007669"/>
    <property type="project" value="TreeGrafter"/>
</dbReference>
<dbReference type="GO" id="GO:0003735">
    <property type="term" value="F:structural constituent of ribosome"/>
    <property type="evidence" value="ECO:0007669"/>
    <property type="project" value="InterPro"/>
</dbReference>
<dbReference type="GO" id="GO:0006412">
    <property type="term" value="P:translation"/>
    <property type="evidence" value="ECO:0007669"/>
    <property type="project" value="UniProtKB-UniRule"/>
</dbReference>
<dbReference type="FunFam" id="4.10.410.60:FF:000001">
    <property type="entry name" value="50S ribosomal protein L35"/>
    <property type="match status" value="1"/>
</dbReference>
<dbReference type="Gene3D" id="4.10.410.60">
    <property type="match status" value="1"/>
</dbReference>
<dbReference type="HAMAP" id="MF_00514">
    <property type="entry name" value="Ribosomal_bL35"/>
    <property type="match status" value="1"/>
</dbReference>
<dbReference type="InterPro" id="IPR001706">
    <property type="entry name" value="Ribosomal_bL35"/>
</dbReference>
<dbReference type="InterPro" id="IPR021137">
    <property type="entry name" value="Ribosomal_bL35-like"/>
</dbReference>
<dbReference type="InterPro" id="IPR018265">
    <property type="entry name" value="Ribosomal_bL35_CS"/>
</dbReference>
<dbReference type="InterPro" id="IPR037229">
    <property type="entry name" value="Ribosomal_bL35_sf"/>
</dbReference>
<dbReference type="NCBIfam" id="TIGR00001">
    <property type="entry name" value="rpmI_bact"/>
    <property type="match status" value="1"/>
</dbReference>
<dbReference type="PANTHER" id="PTHR33343">
    <property type="entry name" value="54S RIBOSOMAL PROTEIN BL35M"/>
    <property type="match status" value="1"/>
</dbReference>
<dbReference type="PANTHER" id="PTHR33343:SF1">
    <property type="entry name" value="LARGE RIBOSOMAL SUBUNIT PROTEIN BL35M"/>
    <property type="match status" value="1"/>
</dbReference>
<dbReference type="Pfam" id="PF01632">
    <property type="entry name" value="Ribosomal_L35p"/>
    <property type="match status" value="1"/>
</dbReference>
<dbReference type="PRINTS" id="PR00064">
    <property type="entry name" value="RIBOSOMALL35"/>
</dbReference>
<dbReference type="SUPFAM" id="SSF143034">
    <property type="entry name" value="L35p-like"/>
    <property type="match status" value="1"/>
</dbReference>
<dbReference type="PROSITE" id="PS00936">
    <property type="entry name" value="RIBOSOMAL_L35"/>
    <property type="match status" value="1"/>
</dbReference>
<protein>
    <recommendedName>
        <fullName evidence="1">Large ribosomal subunit protein bL35</fullName>
    </recommendedName>
    <alternativeName>
        <fullName evidence="3">50S ribosomal protein L35</fullName>
    </alternativeName>
</protein>
<comment type="similarity">
    <text evidence="1">Belongs to the bacterial ribosomal protein bL35 family.</text>
</comment>
<feature type="chain" id="PRO_0000258679" description="Large ribosomal subunit protein bL35">
    <location>
        <begin position="1"/>
        <end position="65"/>
    </location>
</feature>
<feature type="region of interest" description="Disordered" evidence="2">
    <location>
        <begin position="1"/>
        <end position="22"/>
    </location>
</feature>
<feature type="compositionally biased region" description="Basic residues" evidence="2">
    <location>
        <begin position="10"/>
        <end position="22"/>
    </location>
</feature>
<sequence>MPKIKTVRGAAKRFKKTGKGGFKHKHANLRHILTKKATKRKRHLRPKAMVSKGDLGLVIACLPYA</sequence>
<keyword id="KW-0687">Ribonucleoprotein</keyword>
<keyword id="KW-0689">Ribosomal protein</keyword>
<name>RL35_ECOL5</name>
<accession>Q0THB2</accession>
<organism>
    <name type="scientific">Escherichia coli O6:K15:H31 (strain 536 / UPEC)</name>
    <dbReference type="NCBI Taxonomy" id="362663"/>
    <lineage>
        <taxon>Bacteria</taxon>
        <taxon>Pseudomonadati</taxon>
        <taxon>Pseudomonadota</taxon>
        <taxon>Gammaproteobacteria</taxon>
        <taxon>Enterobacterales</taxon>
        <taxon>Enterobacteriaceae</taxon>
        <taxon>Escherichia</taxon>
    </lineage>
</organism>
<proteinExistence type="inferred from homology"/>
<evidence type="ECO:0000255" key="1">
    <source>
        <dbReference type="HAMAP-Rule" id="MF_00514"/>
    </source>
</evidence>
<evidence type="ECO:0000256" key="2">
    <source>
        <dbReference type="SAM" id="MobiDB-lite"/>
    </source>
</evidence>
<evidence type="ECO:0000305" key="3"/>